<comment type="function">
    <text evidence="1">Plays critical roles in virus replication, from virus entry and uncoating to assembly and budding of the virus particle. M1 binding to ribonucleocapsids (RNPs) in nucleus seems to inhibit viral transcription. Interaction of viral NEP with M1-RNP is thought to promote nuclear export of the complex, which is targeted to the virion assembly site at the apical plasma membrane in polarized epithelial cells. Interactions with NA and HA may bring M1, a non-raft-associated protein, into lipid rafts. Forms a continuous shell on the inner side of the lipid bilayer in virion, where it binds the RNP. During virus entry into cell, the M2 ion channel acidifies the internal virion core, inducing M1 dissociation from the RNP. M1-free RNPs are transported to the nucleus, where viral transcription and replication can take place.</text>
</comment>
<comment type="function">
    <text evidence="1">Determines the virion's shape: spherical or filamentous. Clinical isolates of influenza are characterized by the presence of significant proportion of filamentous virions, whereas after multiple passage on eggs or cell culture, virions have only spherical morphology. Filamentous virions are thought to be important to infect neighboring cells, and spherical virions more suited to spread through aerosol between hosts organisms.</text>
</comment>
<comment type="subunit">
    <text evidence="1">Homodimer and homomultimer. Interacts with NEP. Binds ribonucleocapsid by both interacting with genomic RNA and NP protein. May interact with HA and NA. Cannot bind NP without genomic RNA.</text>
</comment>
<comment type="subcellular location">
    <subcellularLocation>
        <location evidence="1">Virion membrane</location>
        <topology evidence="1">Peripheral membrane protein</topology>
        <orientation evidence="1">Cytoplasmic side</orientation>
    </subcellularLocation>
    <subcellularLocation>
        <location evidence="1">Host nucleus</location>
    </subcellularLocation>
</comment>
<comment type="alternative products">
    <event type="alternative splicing"/>
    <isoform>
        <id>Q0HD58-1</id>
        <name>M1</name>
        <sequence type="displayed"/>
    </isoform>
    <isoform>
        <id>Q0HD59-1</id>
        <name>M2</name>
        <sequence type="external"/>
    </isoform>
    <text>Only the first 9 residues are shared by the 2 isoforms.</text>
</comment>
<comment type="miscellaneous">
    <text evidence="1">Most abundant protein in virion. When expressed alone can form virus-like particles in transfected cells.</text>
</comment>
<comment type="similarity">
    <text evidence="1">Belongs to the influenza viruses Matrix protein M1 family.</text>
</comment>
<organism>
    <name type="scientific">Influenza A virus (strain A/Hickox/1940 H1N1)</name>
    <dbReference type="NCBI Taxonomy" id="383543"/>
    <lineage>
        <taxon>Viruses</taxon>
        <taxon>Riboviria</taxon>
        <taxon>Orthornavirae</taxon>
        <taxon>Negarnaviricota</taxon>
        <taxon>Polyploviricotina</taxon>
        <taxon>Insthoviricetes</taxon>
        <taxon>Articulavirales</taxon>
        <taxon>Orthomyxoviridae</taxon>
        <taxon>Alphainfluenzavirus</taxon>
        <taxon>Alphainfluenzavirus influenzae</taxon>
        <taxon>Influenza A virus</taxon>
    </lineage>
</organism>
<organismHost>
    <name type="scientific">Aves</name>
    <dbReference type="NCBI Taxonomy" id="8782"/>
</organismHost>
<organismHost>
    <name type="scientific">Homo sapiens</name>
    <name type="common">Human</name>
    <dbReference type="NCBI Taxonomy" id="9606"/>
</organismHost>
<organismHost>
    <name type="scientific">Sus scrofa</name>
    <name type="common">Pig</name>
    <dbReference type="NCBI Taxonomy" id="9823"/>
</organismHost>
<reference key="1">
    <citation type="submission" date="2006-08" db="EMBL/GenBank/DDBJ databases">
        <title>The NIAID influenza genome sequencing project.</title>
        <authorList>
            <person name="Spiro D."/>
            <person name="Ghedin E."/>
            <person name="Sengamalay N."/>
            <person name="Halpin R."/>
            <person name="Boyne A."/>
            <person name="Zaborsky J."/>
            <person name="Feldblyum T."/>
            <person name="Subbu V."/>
            <person name="Sparenborg J."/>
            <person name="Shumway M."/>
            <person name="Sitz J."/>
            <person name="Katzel D."/>
            <person name="Koo H."/>
            <person name="Salzberg S.L."/>
            <person name="Griesemer S."/>
            <person name="St George K."/>
            <person name="Bennett R."/>
            <person name="Taylor J."/>
            <person name="Bennink J.R."/>
            <person name="Yewdell J.W."/>
            <person name="Bao Y."/>
            <person name="Bolotov P."/>
            <person name="Dernovoy D."/>
            <person name="Kiryutin B."/>
            <person name="Lipman D.J."/>
            <person name="Tatusova T."/>
        </authorList>
    </citation>
    <scope>NUCLEOTIDE SEQUENCE [GENOMIC RNA]</scope>
</reference>
<reference key="2">
    <citation type="submission" date="2006-09" db="EMBL/GenBank/DDBJ databases">
        <authorList>
            <consortium name="The NIAID Influenza Genome Sequencing Consortium"/>
        </authorList>
    </citation>
    <scope>NUCLEOTIDE SEQUENCE [GENOMIC RNA]</scope>
</reference>
<keyword id="KW-0025">Alternative splicing</keyword>
<keyword id="KW-1048">Host nucleus</keyword>
<keyword id="KW-0472">Membrane</keyword>
<keyword id="KW-0694">RNA-binding</keyword>
<keyword id="KW-0468">Viral matrix protein</keyword>
<keyword id="KW-0946">Virion</keyword>
<name>M1_I40A0</name>
<accession>Q0HD58</accession>
<gene>
    <name evidence="1" type="primary">M</name>
</gene>
<sequence length="252" mass="27833">MSLLTEVETYVLSIVPSGPLKAEIAQRLEDVFAGKNTDLEALMEWLKTRPILSPLTKGILGFVFTLTVPSERGLQRRRFVQNALNGNGDPNNMDRAVKLYRKLKREITFHGAKEIALSYSAGALASCMGLIYNRMGAVTTEVAFGLVCATCEQIADSQHRSHRQMVTTTNPLIRHENRMVLASTTAKAMEQMAGSSEQAAEAMEVASQARQMVQAMRAIGTHPSSSAGLKNDLLENLQAYQKRMGVQMQRFK</sequence>
<protein>
    <recommendedName>
        <fullName evidence="1">Matrix protein 1</fullName>
        <shortName evidence="1">M1</shortName>
    </recommendedName>
</protein>
<feature type="chain" id="PRO_0000372904" description="Matrix protein 1">
    <location>
        <begin position="1"/>
        <end position="252"/>
    </location>
</feature>
<feature type="region of interest" description="Membrane-binding" evidence="1">
    <location>
        <begin position="1"/>
        <end position="164"/>
    </location>
</feature>
<feature type="region of interest" description="RNP-binding" evidence="1">
    <location>
        <begin position="165"/>
        <end position="252"/>
    </location>
</feature>
<feature type="short sequence motif" description="Nuclear localization signal" evidence="1">
    <location>
        <begin position="101"/>
        <end position="105"/>
    </location>
</feature>
<proteinExistence type="inferred from homology"/>
<evidence type="ECO:0000255" key="1">
    <source>
        <dbReference type="HAMAP-Rule" id="MF_04068"/>
    </source>
</evidence>
<dbReference type="EMBL" id="CY013272">
    <property type="protein sequence ID" value="ABI20827.1"/>
    <property type="molecule type" value="Other_RNA"/>
</dbReference>
<dbReference type="SMR" id="Q0HD58"/>
<dbReference type="Proteomes" id="UP000156248">
    <property type="component" value="Genome"/>
</dbReference>
<dbReference type="GO" id="GO:0042025">
    <property type="term" value="C:host cell nucleus"/>
    <property type="evidence" value="ECO:0007669"/>
    <property type="project" value="UniProtKB-SubCell"/>
</dbReference>
<dbReference type="GO" id="GO:0016020">
    <property type="term" value="C:membrane"/>
    <property type="evidence" value="ECO:0007669"/>
    <property type="project" value="UniProtKB-KW"/>
</dbReference>
<dbReference type="GO" id="GO:0055036">
    <property type="term" value="C:virion membrane"/>
    <property type="evidence" value="ECO:0007669"/>
    <property type="project" value="UniProtKB-SubCell"/>
</dbReference>
<dbReference type="GO" id="GO:0003723">
    <property type="term" value="F:RNA binding"/>
    <property type="evidence" value="ECO:0007669"/>
    <property type="project" value="UniProtKB-UniRule"/>
</dbReference>
<dbReference type="GO" id="GO:0039660">
    <property type="term" value="F:structural constituent of virion"/>
    <property type="evidence" value="ECO:0007669"/>
    <property type="project" value="UniProtKB-UniRule"/>
</dbReference>
<dbReference type="GO" id="GO:0046761">
    <property type="term" value="P:viral budding from plasma membrane"/>
    <property type="evidence" value="ECO:0007669"/>
    <property type="project" value="UniProtKB-UniRule"/>
</dbReference>
<dbReference type="FunFam" id="1.10.10.180:FF:000001">
    <property type="entry name" value="Matrix protein 1"/>
    <property type="match status" value="1"/>
</dbReference>
<dbReference type="FunFam" id="1.20.91.10:FF:000001">
    <property type="entry name" value="Matrix protein 1"/>
    <property type="match status" value="1"/>
</dbReference>
<dbReference type="Gene3D" id="1.10.10.180">
    <property type="match status" value="1"/>
</dbReference>
<dbReference type="Gene3D" id="1.20.91.10">
    <property type="match status" value="1"/>
</dbReference>
<dbReference type="HAMAP" id="MF_04068">
    <property type="entry name" value="INFV_M1"/>
    <property type="match status" value="1"/>
</dbReference>
<dbReference type="InterPro" id="IPR036039">
    <property type="entry name" value="Flu_matrix_M1"/>
</dbReference>
<dbReference type="InterPro" id="IPR013188">
    <property type="entry name" value="Flu_matrix_M1_C"/>
</dbReference>
<dbReference type="InterPro" id="IPR001561">
    <property type="entry name" value="Flu_matrix_M1_N"/>
</dbReference>
<dbReference type="InterPro" id="IPR015423">
    <property type="entry name" value="Flu_matrix_M1_N_sub1"/>
</dbReference>
<dbReference type="InterPro" id="IPR015799">
    <property type="entry name" value="Flu_matrix_M1_N_sub2"/>
</dbReference>
<dbReference type="InterPro" id="IPR037533">
    <property type="entry name" value="INFV_M1"/>
</dbReference>
<dbReference type="Pfam" id="PF00598">
    <property type="entry name" value="Flu_M1"/>
    <property type="match status" value="1"/>
</dbReference>
<dbReference type="Pfam" id="PF08289">
    <property type="entry name" value="Flu_M1_C"/>
    <property type="match status" value="1"/>
</dbReference>
<dbReference type="SMART" id="SM00759">
    <property type="entry name" value="Flu_M1_C"/>
    <property type="match status" value="1"/>
</dbReference>
<dbReference type="SUPFAM" id="SSF48145">
    <property type="entry name" value="Influenza virus matrix protein M1"/>
    <property type="match status" value="1"/>
</dbReference>